<evidence type="ECO:0000255" key="1">
    <source>
        <dbReference type="HAMAP-Rule" id="MF_01389"/>
    </source>
</evidence>
<proteinExistence type="inferred from homology"/>
<name>UREG_ALKEH</name>
<dbReference type="EMBL" id="CP000453">
    <property type="protein sequence ID" value="ABI55542.1"/>
    <property type="molecule type" value="Genomic_DNA"/>
</dbReference>
<dbReference type="RefSeq" id="WP_011627938.1">
    <property type="nucleotide sequence ID" value="NC_008340.1"/>
</dbReference>
<dbReference type="SMR" id="Q0AC95"/>
<dbReference type="KEGG" id="aeh:Mlg_0187"/>
<dbReference type="eggNOG" id="COG0378">
    <property type="taxonomic scope" value="Bacteria"/>
</dbReference>
<dbReference type="HOGENOM" id="CLU_072144_1_0_6"/>
<dbReference type="OrthoDB" id="9802035at2"/>
<dbReference type="Proteomes" id="UP000001962">
    <property type="component" value="Chromosome"/>
</dbReference>
<dbReference type="GO" id="GO:0005737">
    <property type="term" value="C:cytoplasm"/>
    <property type="evidence" value="ECO:0007669"/>
    <property type="project" value="UniProtKB-SubCell"/>
</dbReference>
<dbReference type="GO" id="GO:0005525">
    <property type="term" value="F:GTP binding"/>
    <property type="evidence" value="ECO:0007669"/>
    <property type="project" value="UniProtKB-KW"/>
</dbReference>
<dbReference type="GO" id="GO:0003924">
    <property type="term" value="F:GTPase activity"/>
    <property type="evidence" value="ECO:0007669"/>
    <property type="project" value="InterPro"/>
</dbReference>
<dbReference type="GO" id="GO:0016151">
    <property type="term" value="F:nickel cation binding"/>
    <property type="evidence" value="ECO:0007669"/>
    <property type="project" value="UniProtKB-UniRule"/>
</dbReference>
<dbReference type="GO" id="GO:0043419">
    <property type="term" value="P:urea catabolic process"/>
    <property type="evidence" value="ECO:0007669"/>
    <property type="project" value="InterPro"/>
</dbReference>
<dbReference type="CDD" id="cd05540">
    <property type="entry name" value="UreG"/>
    <property type="match status" value="1"/>
</dbReference>
<dbReference type="FunFam" id="3.40.50.300:FF:000208">
    <property type="entry name" value="Urease accessory protein UreG"/>
    <property type="match status" value="1"/>
</dbReference>
<dbReference type="Gene3D" id="3.40.50.300">
    <property type="entry name" value="P-loop containing nucleotide triphosphate hydrolases"/>
    <property type="match status" value="1"/>
</dbReference>
<dbReference type="HAMAP" id="MF_01389">
    <property type="entry name" value="UreG"/>
    <property type="match status" value="1"/>
</dbReference>
<dbReference type="InterPro" id="IPR003495">
    <property type="entry name" value="CobW/HypB/UreG_nucleotide-bd"/>
</dbReference>
<dbReference type="InterPro" id="IPR027417">
    <property type="entry name" value="P-loop_NTPase"/>
</dbReference>
<dbReference type="InterPro" id="IPR004400">
    <property type="entry name" value="UreG"/>
</dbReference>
<dbReference type="NCBIfam" id="TIGR00101">
    <property type="entry name" value="ureG"/>
    <property type="match status" value="1"/>
</dbReference>
<dbReference type="PANTHER" id="PTHR31715">
    <property type="entry name" value="UREASE ACCESSORY PROTEIN G"/>
    <property type="match status" value="1"/>
</dbReference>
<dbReference type="PANTHER" id="PTHR31715:SF0">
    <property type="entry name" value="UREASE ACCESSORY PROTEIN G"/>
    <property type="match status" value="1"/>
</dbReference>
<dbReference type="Pfam" id="PF02492">
    <property type="entry name" value="cobW"/>
    <property type="match status" value="1"/>
</dbReference>
<dbReference type="PIRSF" id="PIRSF005624">
    <property type="entry name" value="Ni-bind_GTPase"/>
    <property type="match status" value="1"/>
</dbReference>
<dbReference type="SUPFAM" id="SSF52540">
    <property type="entry name" value="P-loop containing nucleoside triphosphate hydrolases"/>
    <property type="match status" value="1"/>
</dbReference>
<comment type="function">
    <text evidence="1">Facilitates the functional incorporation of the urease nickel metallocenter. This process requires GTP hydrolysis, probably effectuated by UreG.</text>
</comment>
<comment type="subunit">
    <text evidence="1">Homodimer. UreD, UreF and UreG form a complex that acts as a GTP-hydrolysis-dependent molecular chaperone, activating the urease apoprotein by helping to assemble the nickel containing metallocenter of UreC. The UreE protein probably delivers the nickel.</text>
</comment>
<comment type="subcellular location">
    <subcellularLocation>
        <location evidence="1">Cytoplasm</location>
    </subcellularLocation>
</comment>
<comment type="similarity">
    <text evidence="1">Belongs to the SIMIBI class G3E GTPase family. UreG subfamily.</text>
</comment>
<reference key="1">
    <citation type="submission" date="2006-08" db="EMBL/GenBank/DDBJ databases">
        <title>Complete sequence of Alkalilimnicola ehrilichei MLHE-1.</title>
        <authorList>
            <person name="Copeland A."/>
            <person name="Lucas S."/>
            <person name="Lapidus A."/>
            <person name="Barry K."/>
            <person name="Detter J.C."/>
            <person name="Glavina del Rio T."/>
            <person name="Hammon N."/>
            <person name="Israni S."/>
            <person name="Dalin E."/>
            <person name="Tice H."/>
            <person name="Pitluck S."/>
            <person name="Sims D."/>
            <person name="Brettin T."/>
            <person name="Bruce D."/>
            <person name="Han C."/>
            <person name="Tapia R."/>
            <person name="Gilna P."/>
            <person name="Schmutz J."/>
            <person name="Larimer F."/>
            <person name="Land M."/>
            <person name="Hauser L."/>
            <person name="Kyrpides N."/>
            <person name="Mikhailova N."/>
            <person name="Oremland R.S."/>
            <person name="Hoeft S.E."/>
            <person name="Switzer-Blum J."/>
            <person name="Kulp T."/>
            <person name="King G."/>
            <person name="Tabita R."/>
            <person name="Witte B."/>
            <person name="Santini J.M."/>
            <person name="Basu P."/>
            <person name="Hollibaugh J.T."/>
            <person name="Xie G."/>
            <person name="Stolz J.F."/>
            <person name="Richardson P."/>
        </authorList>
    </citation>
    <scope>NUCLEOTIDE SEQUENCE [LARGE SCALE GENOMIC DNA]</scope>
    <source>
        <strain>ATCC BAA-1101 / DSM 17681 / MLHE-1</strain>
    </source>
</reference>
<protein>
    <recommendedName>
        <fullName evidence="1">Urease accessory protein UreG</fullName>
    </recommendedName>
</protein>
<sequence length="211" mass="22603">MKDKPALRVGIGGPVGSGKTALVEALCKALRDHYEIAVVTNDIYTREDAEFLTRNGALPADRIIGVETGGCPHTAIREDASMNLAAVGDLNQRFPELEVVFIESGGDNLSATFSPELSDLTLYVIDVCAGDKIPRKGGPGITRSDLLVINKIDLAAGVGASLEVMDRDSRRMRGDRPFIFTNLHAGEGLESVIDFIIREGMLDRKPGLAPA</sequence>
<keyword id="KW-0143">Chaperone</keyword>
<keyword id="KW-0963">Cytoplasm</keyword>
<keyword id="KW-0342">GTP-binding</keyword>
<keyword id="KW-0996">Nickel insertion</keyword>
<keyword id="KW-0547">Nucleotide-binding</keyword>
<keyword id="KW-1185">Reference proteome</keyword>
<accession>Q0AC95</accession>
<organism>
    <name type="scientific">Alkalilimnicola ehrlichii (strain ATCC BAA-1101 / DSM 17681 / MLHE-1)</name>
    <dbReference type="NCBI Taxonomy" id="187272"/>
    <lineage>
        <taxon>Bacteria</taxon>
        <taxon>Pseudomonadati</taxon>
        <taxon>Pseudomonadota</taxon>
        <taxon>Gammaproteobacteria</taxon>
        <taxon>Chromatiales</taxon>
        <taxon>Ectothiorhodospiraceae</taxon>
        <taxon>Alkalilimnicola</taxon>
    </lineage>
</organism>
<gene>
    <name evidence="1" type="primary">ureG</name>
    <name type="ordered locus">Mlg_0187</name>
</gene>
<feature type="chain" id="PRO_0000347344" description="Urease accessory protein UreG">
    <location>
        <begin position="1"/>
        <end position="211"/>
    </location>
</feature>
<feature type="binding site" evidence="1">
    <location>
        <begin position="13"/>
        <end position="20"/>
    </location>
    <ligand>
        <name>GTP</name>
        <dbReference type="ChEBI" id="CHEBI:37565"/>
    </ligand>
</feature>